<organism>
    <name type="scientific">Escherichia coli</name>
    <dbReference type="NCBI Taxonomy" id="562"/>
    <lineage>
        <taxon>Bacteria</taxon>
        <taxon>Pseudomonadati</taxon>
        <taxon>Pseudomonadota</taxon>
        <taxon>Gammaproteobacteria</taxon>
        <taxon>Enterobacterales</taxon>
        <taxon>Enterobacteriaceae</taxon>
        <taxon>Escherichia</taxon>
    </lineage>
</organism>
<sequence>MSKGKIEIIETCCRRCGKSIRTLSHTIIGADDAREKFGSICGGCITPEEDNELTEMLLAAAVRRMSGATLQ</sequence>
<gene>
    <name type="primary">kleB</name>
    <name type="synonym">kcrA2</name>
</gene>
<keyword id="KW-0238">DNA-binding</keyword>
<keyword id="KW-0614">Plasmid</keyword>
<keyword id="KW-0804">Transcription</keyword>
<keyword id="KW-0805">Transcription regulation</keyword>
<evidence type="ECO:0000250" key="1"/>
<proteinExistence type="predicted"/>
<geneLocation type="plasmid">
    <name>IncP-beta R751</name>
</geneLocation>
<protein>
    <recommendedName>
        <fullName>Protein KleB</fullName>
    </recommendedName>
    <alternativeName>
        <fullName>KcrA2 protein</fullName>
    </alternativeName>
</protein>
<feature type="chain" id="PRO_0000068367" description="Protein KleB">
    <location>
        <begin position="1"/>
        <end position="71"/>
    </location>
</feature>
<feature type="DNA-binding region" description="H-T-H motif" evidence="1">
    <location>
        <begin position="9"/>
        <end position="28"/>
    </location>
</feature>
<name>KLEB1_ECOLX</name>
<reference key="1">
    <citation type="journal article" date="1995" name="Microbiology">
        <title>Evolution of the korA-oriV segment of promiscuous IncP plasmids.</title>
        <authorList>
            <person name="Thomas C.M."/>
            <person name="Smith C.A."/>
            <person name="Ibbotson J.P."/>
            <person name="Johnston L."/>
            <person name="Wang N."/>
        </authorList>
    </citation>
    <scope>NUCLEOTIDE SEQUENCE [GENOMIC DNA]</scope>
</reference>
<accession>Q52279</accession>
<dbReference type="EMBL" id="U67194">
    <property type="protein sequence ID" value="AAC64426.1"/>
    <property type="molecule type" value="Genomic_DNA"/>
</dbReference>
<dbReference type="RefSeq" id="WP_010890114.1">
    <property type="nucleotide sequence ID" value="NZ_JBEEEK010000035.1"/>
</dbReference>
<dbReference type="GO" id="GO:0003677">
    <property type="term" value="F:DNA binding"/>
    <property type="evidence" value="ECO:0007669"/>
    <property type="project" value="UniProtKB-KW"/>
</dbReference>
<dbReference type="InterPro" id="IPR024392">
    <property type="entry name" value="DUF2688"/>
</dbReference>
<dbReference type="Pfam" id="PF10892">
    <property type="entry name" value="DUF2688"/>
    <property type="match status" value="1"/>
</dbReference>